<sequence length="363" mass="39910">MAAARPTVSIYNKDGSVSSETLALPFVFKAPIRPDLVRSVHTAVAKNKRQPYAVSEKAGHQTSAESWGTGRALARIPRVGGGGTHRSGQAAFGNMCRSGRMFAPTKTWRKWHVKVNQNEKRYAIASAVAASGVPSLLLARGHRIEEIPEVPLVVDDAVQSFQKTKEAVALLKEIKAYRDVIKVANSRKLRAGKGKLRNRRHVQRRGPLVVFNEDTGIVKAFRNIPGVEIVNVRRLNLLQLAPGGHLGRFVIWTKSAFGLLDSVFGSTTEVAQLKKNYFLPENIISNADVTRLINSDEIQSIVKAAGPSRVKRAHVQKKNPLKNKAVLSRLNPYAKAYKANVKINSEKTPKAAGEKFLSVLHEN</sequence>
<gene>
    <name type="primary">rpl401</name>
    <name type="synonym">rpl4b</name>
    <name type="ORF">SPBC1711.06</name>
</gene>
<protein>
    <recommendedName>
        <fullName evidence="3">Large ribosomal subunit protein uL4B</fullName>
    </recommendedName>
    <alternativeName>
        <fullName>60S ribosomal protein L4-B</fullName>
    </alternativeName>
</protein>
<dbReference type="EMBL" id="CU329671">
    <property type="protein sequence ID" value="CAB88236.1"/>
    <property type="molecule type" value="Genomic_DNA"/>
</dbReference>
<dbReference type="RefSeq" id="NP_595879.1">
    <property type="nucleotide sequence ID" value="NM_001021785.2"/>
</dbReference>
<dbReference type="PDB" id="8ESQ">
    <property type="method" value="EM"/>
    <property type="resolution" value="2.80 A"/>
    <property type="chains" value="C=1-363"/>
</dbReference>
<dbReference type="PDB" id="8ESR">
    <property type="method" value="EM"/>
    <property type="resolution" value="3.20 A"/>
    <property type="chains" value="C=1-363"/>
</dbReference>
<dbReference type="PDB" id="8ETC">
    <property type="method" value="EM"/>
    <property type="resolution" value="3.10 A"/>
    <property type="chains" value="C=1-363"/>
</dbReference>
<dbReference type="PDB" id="8ETG">
    <property type="method" value="EM"/>
    <property type="resolution" value="3.40 A"/>
    <property type="chains" value="C=1-363"/>
</dbReference>
<dbReference type="PDB" id="8ETH">
    <property type="method" value="EM"/>
    <property type="resolution" value="3.80 A"/>
    <property type="chains" value="C=1-363"/>
</dbReference>
<dbReference type="PDB" id="8ETI">
    <property type="method" value="EM"/>
    <property type="resolution" value="3.70 A"/>
    <property type="chains" value="C=1-363"/>
</dbReference>
<dbReference type="PDB" id="8ETJ">
    <property type="method" value="EM"/>
    <property type="resolution" value="3.20 A"/>
    <property type="chains" value="C=1-363"/>
</dbReference>
<dbReference type="PDB" id="8EUG">
    <property type="method" value="EM"/>
    <property type="resolution" value="2.80 A"/>
    <property type="chains" value="C=1-363"/>
</dbReference>
<dbReference type="PDB" id="8EUI">
    <property type="method" value="EM"/>
    <property type="resolution" value="3.10 A"/>
    <property type="chains" value="C=1-363"/>
</dbReference>
<dbReference type="PDB" id="8EUP">
    <property type="method" value="EM"/>
    <property type="resolution" value="3.10 A"/>
    <property type="chains" value="C=1-363"/>
</dbReference>
<dbReference type="PDB" id="8EUY">
    <property type="method" value="EM"/>
    <property type="resolution" value="3.00 A"/>
    <property type="chains" value="C=1-363"/>
</dbReference>
<dbReference type="PDB" id="8EV3">
    <property type="method" value="EM"/>
    <property type="resolution" value="3.00 A"/>
    <property type="chains" value="C=1-363"/>
</dbReference>
<dbReference type="PDBsum" id="8ESQ"/>
<dbReference type="PDBsum" id="8ESR"/>
<dbReference type="PDBsum" id="8ETC"/>
<dbReference type="PDBsum" id="8ETG"/>
<dbReference type="PDBsum" id="8ETH"/>
<dbReference type="PDBsum" id="8ETI"/>
<dbReference type="PDBsum" id="8ETJ"/>
<dbReference type="PDBsum" id="8EUG"/>
<dbReference type="PDBsum" id="8EUI"/>
<dbReference type="PDBsum" id="8EUP"/>
<dbReference type="PDBsum" id="8EUY"/>
<dbReference type="PDBsum" id="8EV3"/>
<dbReference type="SMR" id="Q9P784"/>
<dbReference type="BioGRID" id="276330">
    <property type="interactions" value="11"/>
</dbReference>
<dbReference type="FunCoup" id="Q9P784">
    <property type="interactions" value="545"/>
</dbReference>
<dbReference type="STRING" id="284812.Q9P784"/>
<dbReference type="iPTMnet" id="Q9P784"/>
<dbReference type="PaxDb" id="4896-SPBC1711.06.1"/>
<dbReference type="EnsemblFungi" id="SPBC1711.06.1">
    <property type="protein sequence ID" value="SPBC1711.06.1:pep"/>
    <property type="gene ID" value="SPBC1711.06"/>
</dbReference>
<dbReference type="GeneID" id="2539780"/>
<dbReference type="KEGG" id="spo:2539780"/>
<dbReference type="PomBase" id="SPBC1711.06">
    <property type="gene designation" value="rpl401"/>
</dbReference>
<dbReference type="VEuPathDB" id="FungiDB:SPBC1711.06"/>
<dbReference type="eggNOG" id="KOG1475">
    <property type="taxonomic scope" value="Eukaryota"/>
</dbReference>
<dbReference type="HOGENOM" id="CLU_026535_0_1_1"/>
<dbReference type="InParanoid" id="Q9P784"/>
<dbReference type="OMA" id="DYLEFEN"/>
<dbReference type="PhylomeDB" id="Q9P784"/>
<dbReference type="PRO" id="PR:Q9P784"/>
<dbReference type="Proteomes" id="UP000002485">
    <property type="component" value="Chromosome II"/>
</dbReference>
<dbReference type="GO" id="GO:0005829">
    <property type="term" value="C:cytosol"/>
    <property type="evidence" value="ECO:0007005"/>
    <property type="project" value="PomBase"/>
</dbReference>
<dbReference type="GO" id="GO:0022625">
    <property type="term" value="C:cytosolic large ribosomal subunit"/>
    <property type="evidence" value="ECO:0000269"/>
    <property type="project" value="PomBase"/>
</dbReference>
<dbReference type="GO" id="GO:0030684">
    <property type="term" value="C:preribosome"/>
    <property type="evidence" value="ECO:0000314"/>
    <property type="project" value="PomBase"/>
</dbReference>
<dbReference type="GO" id="GO:0003723">
    <property type="term" value="F:RNA binding"/>
    <property type="evidence" value="ECO:0000318"/>
    <property type="project" value="GO_Central"/>
</dbReference>
<dbReference type="GO" id="GO:0003735">
    <property type="term" value="F:structural constituent of ribosome"/>
    <property type="evidence" value="ECO:0000318"/>
    <property type="project" value="GO_Central"/>
</dbReference>
<dbReference type="GO" id="GO:0002181">
    <property type="term" value="P:cytoplasmic translation"/>
    <property type="evidence" value="ECO:0000266"/>
    <property type="project" value="PomBase"/>
</dbReference>
<dbReference type="FunFam" id="3.40.1370.10:FF:000002">
    <property type="entry name" value="60S ribosomal protein L4"/>
    <property type="match status" value="1"/>
</dbReference>
<dbReference type="Gene3D" id="3.40.1370.10">
    <property type="match status" value="1"/>
</dbReference>
<dbReference type="InterPro" id="IPR025755">
    <property type="entry name" value="Ribos_uL4_C_dom"/>
</dbReference>
<dbReference type="InterPro" id="IPR002136">
    <property type="entry name" value="Ribosomal_uL4"/>
</dbReference>
<dbReference type="InterPro" id="IPR023574">
    <property type="entry name" value="Ribosomal_uL4_dom_sf"/>
</dbReference>
<dbReference type="InterPro" id="IPR013000">
    <property type="entry name" value="Ribosomal_uL4_euk/arc_CS"/>
</dbReference>
<dbReference type="InterPro" id="IPR045240">
    <property type="entry name" value="Ribosomal_uL4_euk/arch"/>
</dbReference>
<dbReference type="PANTHER" id="PTHR19431">
    <property type="entry name" value="60S RIBOSOMAL PROTEIN L4"/>
    <property type="match status" value="1"/>
</dbReference>
<dbReference type="Pfam" id="PF14374">
    <property type="entry name" value="Ribos_L4_asso_C"/>
    <property type="match status" value="1"/>
</dbReference>
<dbReference type="Pfam" id="PF00573">
    <property type="entry name" value="Ribosomal_L4"/>
    <property type="match status" value="1"/>
</dbReference>
<dbReference type="SUPFAM" id="SSF52166">
    <property type="entry name" value="Ribosomal protein L4"/>
    <property type="match status" value="1"/>
</dbReference>
<dbReference type="PROSITE" id="PS00939">
    <property type="entry name" value="RIBOSOMAL_L1E"/>
    <property type="match status" value="1"/>
</dbReference>
<keyword id="KW-0002">3D-structure</keyword>
<keyword id="KW-0963">Cytoplasm</keyword>
<keyword id="KW-1185">Reference proteome</keyword>
<keyword id="KW-0687">Ribonucleoprotein</keyword>
<keyword id="KW-0689">Ribosomal protein</keyword>
<reference key="1">
    <citation type="journal article" date="2002" name="Nature">
        <title>The genome sequence of Schizosaccharomyces pombe.</title>
        <authorList>
            <person name="Wood V."/>
            <person name="Gwilliam R."/>
            <person name="Rajandream M.A."/>
            <person name="Lyne M.H."/>
            <person name="Lyne R."/>
            <person name="Stewart A."/>
            <person name="Sgouros J.G."/>
            <person name="Peat N."/>
            <person name="Hayles J."/>
            <person name="Baker S.G."/>
            <person name="Basham D."/>
            <person name="Bowman S."/>
            <person name="Brooks K."/>
            <person name="Brown D."/>
            <person name="Brown S."/>
            <person name="Chillingworth T."/>
            <person name="Churcher C.M."/>
            <person name="Collins M."/>
            <person name="Connor R."/>
            <person name="Cronin A."/>
            <person name="Davis P."/>
            <person name="Feltwell T."/>
            <person name="Fraser A."/>
            <person name="Gentles S."/>
            <person name="Goble A."/>
            <person name="Hamlin N."/>
            <person name="Harris D.E."/>
            <person name="Hidalgo J."/>
            <person name="Hodgson G."/>
            <person name="Holroyd S."/>
            <person name="Hornsby T."/>
            <person name="Howarth S."/>
            <person name="Huckle E.J."/>
            <person name="Hunt S."/>
            <person name="Jagels K."/>
            <person name="James K.D."/>
            <person name="Jones L."/>
            <person name="Jones M."/>
            <person name="Leather S."/>
            <person name="McDonald S."/>
            <person name="McLean J."/>
            <person name="Mooney P."/>
            <person name="Moule S."/>
            <person name="Mungall K.L."/>
            <person name="Murphy L.D."/>
            <person name="Niblett D."/>
            <person name="Odell C."/>
            <person name="Oliver K."/>
            <person name="O'Neil S."/>
            <person name="Pearson D."/>
            <person name="Quail M.A."/>
            <person name="Rabbinowitsch E."/>
            <person name="Rutherford K.M."/>
            <person name="Rutter S."/>
            <person name="Saunders D."/>
            <person name="Seeger K."/>
            <person name="Sharp S."/>
            <person name="Skelton J."/>
            <person name="Simmonds M.N."/>
            <person name="Squares R."/>
            <person name="Squares S."/>
            <person name="Stevens K."/>
            <person name="Taylor K."/>
            <person name="Taylor R.G."/>
            <person name="Tivey A."/>
            <person name="Walsh S.V."/>
            <person name="Warren T."/>
            <person name="Whitehead S."/>
            <person name="Woodward J.R."/>
            <person name="Volckaert G."/>
            <person name="Aert R."/>
            <person name="Robben J."/>
            <person name="Grymonprez B."/>
            <person name="Weltjens I."/>
            <person name="Vanstreels E."/>
            <person name="Rieger M."/>
            <person name="Schaefer M."/>
            <person name="Mueller-Auer S."/>
            <person name="Gabel C."/>
            <person name="Fuchs M."/>
            <person name="Duesterhoeft A."/>
            <person name="Fritzc C."/>
            <person name="Holzer E."/>
            <person name="Moestl D."/>
            <person name="Hilbert H."/>
            <person name="Borzym K."/>
            <person name="Langer I."/>
            <person name="Beck A."/>
            <person name="Lehrach H."/>
            <person name="Reinhardt R."/>
            <person name="Pohl T.M."/>
            <person name="Eger P."/>
            <person name="Zimmermann W."/>
            <person name="Wedler H."/>
            <person name="Wambutt R."/>
            <person name="Purnelle B."/>
            <person name="Goffeau A."/>
            <person name="Cadieu E."/>
            <person name="Dreano S."/>
            <person name="Gloux S."/>
            <person name="Lelaure V."/>
            <person name="Mottier S."/>
            <person name="Galibert F."/>
            <person name="Aves S.J."/>
            <person name="Xiang Z."/>
            <person name="Hunt C."/>
            <person name="Moore K."/>
            <person name="Hurst S.M."/>
            <person name="Lucas M."/>
            <person name="Rochet M."/>
            <person name="Gaillardin C."/>
            <person name="Tallada V.A."/>
            <person name="Garzon A."/>
            <person name="Thode G."/>
            <person name="Daga R.R."/>
            <person name="Cruzado L."/>
            <person name="Jimenez J."/>
            <person name="Sanchez M."/>
            <person name="del Rey F."/>
            <person name="Benito J."/>
            <person name="Dominguez A."/>
            <person name="Revuelta J.L."/>
            <person name="Moreno S."/>
            <person name="Armstrong J."/>
            <person name="Forsburg S.L."/>
            <person name="Cerutti L."/>
            <person name="Lowe T."/>
            <person name="McCombie W.R."/>
            <person name="Paulsen I."/>
            <person name="Potashkin J."/>
            <person name="Shpakovski G.V."/>
            <person name="Ussery D."/>
            <person name="Barrell B.G."/>
            <person name="Nurse P."/>
        </authorList>
    </citation>
    <scope>NUCLEOTIDE SEQUENCE [LARGE SCALE GENOMIC DNA]</scope>
    <source>
        <strain>972 / ATCC 24843</strain>
    </source>
</reference>
<reference key="2">
    <citation type="journal article" date="2006" name="Nat. Biotechnol.">
        <title>ORFeome cloning and global analysis of protein localization in the fission yeast Schizosaccharomyces pombe.</title>
        <authorList>
            <person name="Matsuyama A."/>
            <person name="Arai R."/>
            <person name="Yashiroda Y."/>
            <person name="Shirai A."/>
            <person name="Kamata A."/>
            <person name="Sekido S."/>
            <person name="Kobayashi Y."/>
            <person name="Hashimoto A."/>
            <person name="Hamamoto M."/>
            <person name="Hiraoka Y."/>
            <person name="Horinouchi S."/>
            <person name="Yoshida M."/>
        </authorList>
    </citation>
    <scope>SUBCELLULAR LOCATION [LARGE SCALE ANALYSIS]</scope>
</reference>
<accession>Q9P784</accession>
<organism>
    <name type="scientific">Schizosaccharomyces pombe (strain 972 / ATCC 24843)</name>
    <name type="common">Fission yeast</name>
    <dbReference type="NCBI Taxonomy" id="284812"/>
    <lineage>
        <taxon>Eukaryota</taxon>
        <taxon>Fungi</taxon>
        <taxon>Dikarya</taxon>
        <taxon>Ascomycota</taxon>
        <taxon>Taphrinomycotina</taxon>
        <taxon>Schizosaccharomycetes</taxon>
        <taxon>Schizosaccharomycetales</taxon>
        <taxon>Schizosaccharomycetaceae</taxon>
        <taxon>Schizosaccharomyces</taxon>
    </lineage>
</organism>
<proteinExistence type="evidence at protein level"/>
<name>RL4B_SCHPO</name>
<comment type="function">
    <text evidence="1">Component of the ribosome, a large ribonucleoprotein complex responsible for the synthesis of proteins in the cell. The small ribosomal subunit (SSU) binds messenger RNAs (mRNAs) and translates the encoded message by selecting cognate aminoacyl-transfer RNA (tRNA) molecules. The large subunit (LSU) contains the ribosomal catalytic site termed the peptidyl transferase center (PTC), which catalyzes the formation of peptide bonds, thereby polymerizing the amino acids delivered by tRNAs into a polypeptide chain. The nascent polypeptides leave the ribosome through a tunnel in the LSU and interact with protein factors that function in enzymatic processing, targeting, and the membrane insertion of nascent chains at the exit of the ribosomal tunnel.</text>
</comment>
<comment type="subunit">
    <text evidence="1">Component of the large ribosomal subunit (LSU). Mature yeast ribosomes consist of a small (40S) and a large (60S) subunit. The 40S small subunit contains 1 molecule of ribosomal RNA (18S rRNA) and at least 33 different proteins. The large 60S subunit contains 3 rRNA molecules (25S, 5.8S and 5S rRNA) and at least 46 different proteins. uL4 is associated with the polypeptide exit tunnel. uL4 interacts with its chaperone ACL4 and the nuclear import receptor KAP104.</text>
</comment>
<comment type="subcellular location">
    <subcellularLocation>
        <location evidence="2">Cytoplasm</location>
    </subcellularLocation>
</comment>
<comment type="domain">
    <text evidence="1">The eukaryote-specific C-terminal extension harbors a nuclear import signal and delivers the ACL4-uL4/RPL4 complex to the pre-ribosome, triggering uL4 release from ACL4 and incorporation into the 60S ribosomal subunit.</text>
</comment>
<comment type="miscellaneous">
    <text>There are 2 genes for uL4 in S.pombe.</text>
</comment>
<comment type="similarity">
    <text evidence="3">Belongs to the universal ribosomal protein uL4 family.</text>
</comment>
<feature type="chain" id="PRO_0000129366" description="Large ribosomal subunit protein uL4B">
    <location>
        <begin position="1"/>
        <end position="363"/>
    </location>
</feature>
<feature type="region of interest" description="C-terminal-extended nuclear localization signal" evidence="1">
    <location>
        <begin position="280"/>
        <end position="363"/>
    </location>
</feature>
<feature type="strand" evidence="6">
    <location>
        <begin position="7"/>
        <end position="11"/>
    </location>
</feature>
<feature type="strand" evidence="4">
    <location>
        <begin position="13"/>
        <end position="15"/>
    </location>
</feature>
<feature type="strand" evidence="6">
    <location>
        <begin position="17"/>
        <end position="23"/>
    </location>
</feature>
<feature type="helix" evidence="6">
    <location>
        <begin position="26"/>
        <end position="29"/>
    </location>
</feature>
<feature type="helix" evidence="6">
    <location>
        <begin position="34"/>
        <end position="44"/>
    </location>
</feature>
<feature type="turn" evidence="6">
    <location>
        <begin position="45"/>
        <end position="48"/>
    </location>
</feature>
<feature type="turn" evidence="7">
    <location>
        <begin position="56"/>
        <end position="59"/>
    </location>
</feature>
<feature type="strand" evidence="7">
    <location>
        <begin position="69"/>
        <end position="73"/>
    </location>
</feature>
<feature type="strand" evidence="7">
    <location>
        <begin position="81"/>
        <end position="84"/>
    </location>
</feature>
<feature type="turn" evidence="7">
    <location>
        <begin position="85"/>
        <end position="88"/>
    </location>
</feature>
<feature type="strand" evidence="7">
    <location>
        <begin position="92"/>
        <end position="96"/>
    </location>
</feature>
<feature type="helix" evidence="6">
    <location>
        <begin position="117"/>
        <end position="130"/>
    </location>
</feature>
<feature type="helix" evidence="6">
    <location>
        <begin position="134"/>
        <end position="138"/>
    </location>
</feature>
<feature type="turn" evidence="6">
    <location>
        <begin position="139"/>
        <end position="141"/>
    </location>
</feature>
<feature type="strand" evidence="6">
    <location>
        <begin position="150"/>
        <end position="154"/>
    </location>
</feature>
<feature type="helix" evidence="6">
    <location>
        <begin position="156"/>
        <end position="160"/>
    </location>
</feature>
<feature type="helix" evidence="6">
    <location>
        <begin position="164"/>
        <end position="173"/>
    </location>
</feature>
<feature type="turn" evidence="6">
    <location>
        <begin position="174"/>
        <end position="176"/>
    </location>
</feature>
<feature type="helix" evidence="6">
    <location>
        <begin position="177"/>
        <end position="185"/>
    </location>
</feature>
<feature type="helix" evidence="6">
    <location>
        <begin position="193"/>
        <end position="196"/>
    </location>
</feature>
<feature type="strand" evidence="6">
    <location>
        <begin position="208"/>
        <end position="213"/>
    </location>
</feature>
<feature type="helix" evidence="6">
    <location>
        <begin position="217"/>
        <end position="221"/>
    </location>
</feature>
<feature type="strand" evidence="4">
    <location>
        <begin position="222"/>
        <end position="224"/>
    </location>
</feature>
<feature type="strand" evidence="6">
    <location>
        <begin position="228"/>
        <end position="231"/>
    </location>
</feature>
<feature type="helix" evidence="6">
    <location>
        <begin position="232"/>
        <end position="234"/>
    </location>
</feature>
<feature type="helix" evidence="6">
    <location>
        <begin position="237"/>
        <end position="240"/>
    </location>
</feature>
<feature type="helix" evidence="6">
    <location>
        <begin position="242"/>
        <end position="244"/>
    </location>
</feature>
<feature type="strand" evidence="6">
    <location>
        <begin position="250"/>
        <end position="253"/>
    </location>
</feature>
<feature type="helix" evidence="6">
    <location>
        <begin position="254"/>
        <end position="258"/>
    </location>
</feature>
<feature type="helix" evidence="6">
    <location>
        <begin position="260"/>
        <end position="263"/>
    </location>
</feature>
<feature type="strand" evidence="6">
    <location>
        <begin position="267"/>
        <end position="269"/>
    </location>
</feature>
<feature type="strand" evidence="6">
    <location>
        <begin position="272"/>
        <end position="274"/>
    </location>
</feature>
<feature type="strand" evidence="5">
    <location>
        <begin position="283"/>
        <end position="285"/>
    </location>
</feature>
<feature type="helix" evidence="6">
    <location>
        <begin position="289"/>
        <end position="293"/>
    </location>
</feature>
<feature type="helix" evidence="6">
    <location>
        <begin position="296"/>
        <end position="299"/>
    </location>
</feature>
<feature type="turn" evidence="6">
    <location>
        <begin position="320"/>
        <end position="322"/>
    </location>
</feature>
<feature type="helix" evidence="6">
    <location>
        <begin position="324"/>
        <end position="330"/>
    </location>
</feature>
<feature type="turn" evidence="6">
    <location>
        <begin position="332"/>
        <end position="335"/>
    </location>
</feature>
<feature type="helix" evidence="6">
    <location>
        <begin position="354"/>
        <end position="360"/>
    </location>
</feature>
<evidence type="ECO:0000250" key="1">
    <source>
        <dbReference type="UniProtKB" id="P49626"/>
    </source>
</evidence>
<evidence type="ECO:0000269" key="2">
    <source>
    </source>
</evidence>
<evidence type="ECO:0000305" key="3"/>
<evidence type="ECO:0007829" key="4">
    <source>
        <dbReference type="PDB" id="8ETG"/>
    </source>
</evidence>
<evidence type="ECO:0007829" key="5">
    <source>
        <dbReference type="PDB" id="8ETJ"/>
    </source>
</evidence>
<evidence type="ECO:0007829" key="6">
    <source>
        <dbReference type="PDB" id="8EUY"/>
    </source>
</evidence>
<evidence type="ECO:0007829" key="7">
    <source>
        <dbReference type="PDB" id="8EV3"/>
    </source>
</evidence>